<dbReference type="EMBL" id="CM001234">
    <property type="protein sequence ID" value="EHA51012.1"/>
    <property type="molecule type" value="Genomic_DNA"/>
</dbReference>
<dbReference type="RefSeq" id="XP_003717331.1">
    <property type="nucleotide sequence ID" value="XM_003717283.1"/>
</dbReference>
<dbReference type="SMR" id="A4R962"/>
<dbReference type="FunCoup" id="A4R962">
    <property type="interactions" value="962"/>
</dbReference>
<dbReference type="STRING" id="242507.A4R962"/>
<dbReference type="EnsemblFungi" id="MGG_06261T0">
    <property type="protein sequence ID" value="MGG_06261T0"/>
    <property type="gene ID" value="MGG_06261"/>
</dbReference>
<dbReference type="GeneID" id="2684416"/>
<dbReference type="KEGG" id="mgr:MGG_06261"/>
<dbReference type="VEuPathDB" id="FungiDB:MGG_06261"/>
<dbReference type="eggNOG" id="KOG1839">
    <property type="taxonomic scope" value="Eukaryota"/>
</dbReference>
<dbReference type="HOGENOM" id="CLU_003256_2_0_1"/>
<dbReference type="InParanoid" id="A4R962"/>
<dbReference type="OMA" id="HPVWDKD"/>
<dbReference type="OrthoDB" id="1414216at2759"/>
<dbReference type="Proteomes" id="UP000009058">
    <property type="component" value="Chromosome 4"/>
</dbReference>
<dbReference type="GO" id="GO:0005737">
    <property type="term" value="C:cytoplasm"/>
    <property type="evidence" value="ECO:0007669"/>
    <property type="project" value="UniProtKB-SubCell"/>
</dbReference>
<dbReference type="GO" id="GO:0003729">
    <property type="term" value="F:mRNA binding"/>
    <property type="evidence" value="ECO:0007669"/>
    <property type="project" value="TreeGrafter"/>
</dbReference>
<dbReference type="GO" id="GO:0048312">
    <property type="term" value="P:intracellular distribution of mitochondria"/>
    <property type="evidence" value="ECO:0007669"/>
    <property type="project" value="TreeGrafter"/>
</dbReference>
<dbReference type="GO" id="GO:0007005">
    <property type="term" value="P:mitochondrion organization"/>
    <property type="evidence" value="ECO:0007669"/>
    <property type="project" value="UniProtKB-UniRule"/>
</dbReference>
<dbReference type="CDD" id="cd15466">
    <property type="entry name" value="CLU-central"/>
    <property type="match status" value="1"/>
</dbReference>
<dbReference type="FunFam" id="1.25.40.10:FF:000293">
    <property type="entry name" value="Clustered mitochondria protein homolog"/>
    <property type="match status" value="1"/>
</dbReference>
<dbReference type="Gene3D" id="1.25.40.10">
    <property type="entry name" value="Tetratricopeptide repeat domain"/>
    <property type="match status" value="2"/>
</dbReference>
<dbReference type="HAMAP" id="MF_03013">
    <property type="entry name" value="CLU"/>
    <property type="match status" value="1"/>
</dbReference>
<dbReference type="InterPro" id="IPR033646">
    <property type="entry name" value="CLU-central"/>
</dbReference>
<dbReference type="InterPro" id="IPR025697">
    <property type="entry name" value="CLU_dom"/>
</dbReference>
<dbReference type="InterPro" id="IPR028275">
    <property type="entry name" value="CLU_N"/>
</dbReference>
<dbReference type="InterPro" id="IPR027523">
    <property type="entry name" value="CLU_prot"/>
</dbReference>
<dbReference type="InterPro" id="IPR023231">
    <property type="entry name" value="GSKIP_dom_sf"/>
</dbReference>
<dbReference type="InterPro" id="IPR011990">
    <property type="entry name" value="TPR-like_helical_dom_sf"/>
</dbReference>
<dbReference type="InterPro" id="IPR019734">
    <property type="entry name" value="TPR_rpt"/>
</dbReference>
<dbReference type="PANTHER" id="PTHR12601:SF6">
    <property type="entry name" value="CLUSTERED MITOCHONDRIA PROTEIN HOMOLOG"/>
    <property type="match status" value="1"/>
</dbReference>
<dbReference type="PANTHER" id="PTHR12601">
    <property type="entry name" value="EUKARYOTIC TRANSLATION INITIATION FACTOR 3 SUBUNIT EIF-3"/>
    <property type="match status" value="1"/>
</dbReference>
<dbReference type="Pfam" id="PF13236">
    <property type="entry name" value="CLU"/>
    <property type="match status" value="1"/>
</dbReference>
<dbReference type="Pfam" id="PF15044">
    <property type="entry name" value="CLU_N"/>
    <property type="match status" value="1"/>
</dbReference>
<dbReference type="Pfam" id="PF12807">
    <property type="entry name" value="eIF3_p135"/>
    <property type="match status" value="1"/>
</dbReference>
<dbReference type="Pfam" id="PF13374">
    <property type="entry name" value="TPR_10"/>
    <property type="match status" value="1"/>
</dbReference>
<dbReference type="Pfam" id="PF13424">
    <property type="entry name" value="TPR_12"/>
    <property type="match status" value="2"/>
</dbReference>
<dbReference type="SMART" id="SM00028">
    <property type="entry name" value="TPR"/>
    <property type="match status" value="3"/>
</dbReference>
<dbReference type="SUPFAM" id="SSF103107">
    <property type="entry name" value="Hypothetical protein c14orf129, hspc210"/>
    <property type="match status" value="1"/>
</dbReference>
<dbReference type="SUPFAM" id="SSF48452">
    <property type="entry name" value="TPR-like"/>
    <property type="match status" value="1"/>
</dbReference>
<dbReference type="PROSITE" id="PS51823">
    <property type="entry name" value="CLU"/>
    <property type="match status" value="1"/>
</dbReference>
<dbReference type="PROSITE" id="PS50005">
    <property type="entry name" value="TPR"/>
    <property type="match status" value="1"/>
</dbReference>
<dbReference type="PROSITE" id="PS50293">
    <property type="entry name" value="TPR_REGION"/>
    <property type="match status" value="1"/>
</dbReference>
<keyword id="KW-0963">Cytoplasm</keyword>
<keyword id="KW-1185">Reference proteome</keyword>
<keyword id="KW-0677">Repeat</keyword>
<keyword id="KW-0802">TPR repeat</keyword>
<reference key="1">
    <citation type="journal article" date="2005" name="Nature">
        <title>The genome sequence of the rice blast fungus Magnaporthe grisea.</title>
        <authorList>
            <person name="Dean R.A."/>
            <person name="Talbot N.J."/>
            <person name="Ebbole D.J."/>
            <person name="Farman M.L."/>
            <person name="Mitchell T.K."/>
            <person name="Orbach M.J."/>
            <person name="Thon M.R."/>
            <person name="Kulkarni R."/>
            <person name="Xu J.-R."/>
            <person name="Pan H."/>
            <person name="Read N.D."/>
            <person name="Lee Y.-H."/>
            <person name="Carbone I."/>
            <person name="Brown D."/>
            <person name="Oh Y.Y."/>
            <person name="Donofrio N."/>
            <person name="Jeong J.S."/>
            <person name="Soanes D.M."/>
            <person name="Djonovic S."/>
            <person name="Kolomiets E."/>
            <person name="Rehmeyer C."/>
            <person name="Li W."/>
            <person name="Harding M."/>
            <person name="Kim S."/>
            <person name="Lebrun M.-H."/>
            <person name="Bohnert H."/>
            <person name="Coughlan S."/>
            <person name="Butler J."/>
            <person name="Calvo S.E."/>
            <person name="Ma L.-J."/>
            <person name="Nicol R."/>
            <person name="Purcell S."/>
            <person name="Nusbaum C."/>
            <person name="Galagan J.E."/>
            <person name="Birren B.W."/>
        </authorList>
    </citation>
    <scope>NUCLEOTIDE SEQUENCE [LARGE SCALE GENOMIC DNA]</scope>
    <source>
        <strain>70-15 / ATCC MYA-4617 / FGSC 8958</strain>
    </source>
</reference>
<proteinExistence type="inferred from homology"/>
<sequence length="1311" mass="145172">MAEKTNGAAAPNGAADAPKSSPEQAQDVADVPVTDENGEQIPEDTVLSLTIVLPQNSEKIPIAVSPHEQVHEVRQSIIEMPNALQYSCFHLEHKGERINDFAQISEIKDIADGDEIHLVEDPYTEKEARIHLIRVRELIGAAGDRTDSVQGILPGLSVYDTVAAEARNATEVGEYEFNAGPNVKALLPKENDPQPKTVKAIQVSPWNPPPAHFRQKGHLLYLIITTNEGEQFQITGHVGGFFVNKSSNSKFDPLPRAGPKAYAAHSLLTLIEQLSPAFSKAFAELQEYTNQREPLSTFQITNAIPAAPWLVPSANSAACTHTPDITRTQESFLVSGVENTDTLRDWNEEFQSAKELPKDGVQDRVFRERLISKLFADYNDAAARGAVLVARGEVAPLNPTEGKDAQIFVYNNVFFSFGADGVGTFTSEGGDEAARVATAKDVSGVKLVNQLDIDGLYTPGTVVVDYLGKRIVGQSIVPGIFKQREPGENQIDYGAVDGKDLVATDERFVPQFQKLSKALKVKPHAVWDKEGKRHDLEGSVETKGLVGTDGRKYVLDLYRITPLDVSWQEEVEAESDAPEYPHRMTVLRPELVELFVRQKMREWVSSEVAKRGQAKKDQAAVEEKKEAKAESEEDSDSSSEEESSSDESDSEESSSDEDEEEEKKPKKKSVPKKAAKKEEVKEEKKDEKEASSDRIDVSDFSFTLNPDVFSGQVPQTDAEKEAMAADEKDVRDACEYLRKTAIPDLLNDLRESEISFPMDGQSLSRLLHKRGINLRYLGQIATASDGPRLQCLKEVSVREMIARGFKHVAAKHLRYLPLPLTSSCISHLLNCLLGTAFNAKPTAEIDPSIRSLYDDADLAFENVTPEILRTAIQEEVARRFRYTLASDWYNNLPHLHMLREVCLKLGIQMQHKEFIFTAEGAASQPAPVPVTNGNGNAPAEGSKKNKKKKKAARDTSPDSVTSSSTIPHTFVPDDIINVVPIVKDSSPRSVLAEEALEAGRISILQNQRKIGQELLLESLSLHEQIYGILHPEVARVYHSLAMLYFQLEEKDAAVELARKAVIVAERTIGVDSQETLLDYLNLSLFLYQLGDSKQALEFTKHALNMWKIIYGPDHPDMITTINNAAVMLQQLKEYHESRRWFEEALRICEVVFGRQSVNSATLLFQLAQALALDQEPKAAVVKMKESYNIFLAELGPEDKNTKEAEGWLEQLTTNAVSIAKHAKDVEERRLRAGIRFTPRAGAIGSTSTAANKVAKSEIERPAAASSMDSRSIDELLKFIEGTDKQKKPAAKKRTGRANPKRRGAEPVSTKA</sequence>
<gene>
    <name evidence="1" type="primary">CLU1</name>
    <name evidence="1" type="synonym">TIF31</name>
    <name type="ORF">MGG_06261</name>
</gene>
<comment type="function">
    <text evidence="1">mRNA-binding protein involved in proper cytoplasmic distribution of mitochondria.</text>
</comment>
<comment type="subunit">
    <text evidence="1">May associate with the eukaryotic translation initiation factor 3 (eIF-3) complex.</text>
</comment>
<comment type="subcellular location">
    <subcellularLocation>
        <location evidence="1">Cytoplasm</location>
    </subcellularLocation>
</comment>
<comment type="similarity">
    <text evidence="1">Belongs to the CLU family.</text>
</comment>
<organism>
    <name type="scientific">Pyricularia oryzae (strain 70-15 / ATCC MYA-4617 / FGSC 8958)</name>
    <name type="common">Rice blast fungus</name>
    <name type="synonym">Magnaporthe oryzae</name>
    <dbReference type="NCBI Taxonomy" id="242507"/>
    <lineage>
        <taxon>Eukaryota</taxon>
        <taxon>Fungi</taxon>
        <taxon>Dikarya</taxon>
        <taxon>Ascomycota</taxon>
        <taxon>Pezizomycotina</taxon>
        <taxon>Sordariomycetes</taxon>
        <taxon>Sordariomycetidae</taxon>
        <taxon>Magnaporthales</taxon>
        <taxon>Pyriculariaceae</taxon>
        <taxon>Pyricularia</taxon>
    </lineage>
</organism>
<name>CLU_PYRO7</name>
<feature type="chain" id="PRO_0000366407" description="Clustered mitochondria protein homolog">
    <location>
        <begin position="1"/>
        <end position="1311"/>
    </location>
</feature>
<feature type="domain" description="Clu" evidence="2">
    <location>
        <begin position="324"/>
        <end position="568"/>
    </location>
</feature>
<feature type="repeat" description="TPR 1">
    <location>
        <begin position="491"/>
        <end position="525"/>
    </location>
</feature>
<feature type="repeat" description="TPR 2">
    <location>
        <begin position="1034"/>
        <end position="1067"/>
    </location>
</feature>
<feature type="repeat" description="TPR 3">
    <location>
        <begin position="1076"/>
        <end position="1109"/>
    </location>
</feature>
<feature type="repeat" description="TPR 4">
    <location>
        <begin position="1118"/>
        <end position="1151"/>
    </location>
</feature>
<feature type="region of interest" description="Disordered" evidence="3">
    <location>
        <begin position="1"/>
        <end position="27"/>
    </location>
</feature>
<feature type="region of interest" description="Disordered" evidence="3">
    <location>
        <begin position="606"/>
        <end position="694"/>
    </location>
</feature>
<feature type="region of interest" description="Disordered" evidence="3">
    <location>
        <begin position="925"/>
        <end position="966"/>
    </location>
</feature>
<feature type="region of interest" description="Disordered" evidence="3">
    <location>
        <begin position="1276"/>
        <end position="1311"/>
    </location>
</feature>
<feature type="compositionally biased region" description="Low complexity" evidence="3">
    <location>
        <begin position="1"/>
        <end position="18"/>
    </location>
</feature>
<feature type="compositionally biased region" description="Basic and acidic residues" evidence="3">
    <location>
        <begin position="606"/>
        <end position="630"/>
    </location>
</feature>
<feature type="compositionally biased region" description="Acidic residues" evidence="3">
    <location>
        <begin position="631"/>
        <end position="661"/>
    </location>
</feature>
<feature type="compositionally biased region" description="Basic residues" evidence="3">
    <location>
        <begin position="665"/>
        <end position="675"/>
    </location>
</feature>
<feature type="compositionally biased region" description="Basic and acidic residues" evidence="3">
    <location>
        <begin position="676"/>
        <end position="694"/>
    </location>
</feature>
<feature type="compositionally biased region" description="Basic and acidic residues" evidence="3">
    <location>
        <begin position="1276"/>
        <end position="1286"/>
    </location>
</feature>
<feature type="compositionally biased region" description="Basic residues" evidence="3">
    <location>
        <begin position="1287"/>
        <end position="1301"/>
    </location>
</feature>
<evidence type="ECO:0000255" key="1">
    <source>
        <dbReference type="HAMAP-Rule" id="MF_03013"/>
    </source>
</evidence>
<evidence type="ECO:0000255" key="2">
    <source>
        <dbReference type="PROSITE-ProRule" id="PRU01167"/>
    </source>
</evidence>
<evidence type="ECO:0000256" key="3">
    <source>
        <dbReference type="SAM" id="MobiDB-lite"/>
    </source>
</evidence>
<protein>
    <recommendedName>
        <fullName evidence="1">Clustered mitochondria protein homolog</fullName>
    </recommendedName>
    <alternativeName>
        <fullName evidence="1">Protein TIF31 homolog</fullName>
    </alternativeName>
</protein>
<accession>A4R962</accession>
<accession>G4N8G4</accession>